<proteinExistence type="evidence at transcript level"/>
<reference key="1">
    <citation type="submission" date="1999-04" db="EMBL/GenBank/DDBJ databases">
        <title>Structural analysis of Arabidopsis thaliana chromosome 5. XI.</title>
        <authorList>
            <person name="Kaneko T."/>
            <person name="Katoh T."/>
            <person name="Asamizu E."/>
            <person name="Sato S."/>
            <person name="Nakamura Y."/>
            <person name="Kotani H."/>
            <person name="Tabata S."/>
        </authorList>
    </citation>
    <scope>NUCLEOTIDE SEQUENCE [LARGE SCALE GENOMIC DNA]</scope>
    <source>
        <strain>cv. Columbia</strain>
    </source>
</reference>
<reference key="2">
    <citation type="journal article" date="1997" name="DNA Res.">
        <title>Structural analysis of Arabidopsis thaliana chromosome 5. II. Sequence features of the regions of 1,044,062 bp covered by thirteen physically assigned P1 clones.</title>
        <authorList>
            <person name="Kotani H."/>
            <person name="Nakamura Y."/>
            <person name="Sato S."/>
            <person name="Kaneko T."/>
            <person name="Asamizu E."/>
            <person name="Miyajima N."/>
            <person name="Tabata S."/>
        </authorList>
    </citation>
    <scope>NUCLEOTIDE SEQUENCE [LARGE SCALE GENOMIC DNA]</scope>
    <source>
        <strain>cv. Columbia</strain>
    </source>
</reference>
<reference key="3">
    <citation type="journal article" date="2017" name="Plant J.">
        <title>Araport11: a complete reannotation of the Arabidopsis thaliana reference genome.</title>
        <authorList>
            <person name="Cheng C.Y."/>
            <person name="Krishnakumar V."/>
            <person name="Chan A.P."/>
            <person name="Thibaud-Nissen F."/>
            <person name="Schobel S."/>
            <person name="Town C.D."/>
        </authorList>
    </citation>
    <scope>GENOME REANNOTATION</scope>
    <source>
        <strain>cv. Columbia</strain>
    </source>
</reference>
<reference key="4">
    <citation type="submission" date="2005-07" db="EMBL/GenBank/DDBJ databases">
        <title>Arabidopsis ORF clones.</title>
        <authorList>
            <person name="Cheuk R.F."/>
            <person name="Chen H."/>
            <person name="Kim C.J."/>
            <person name="Shinn P."/>
            <person name="Ecker J.R."/>
        </authorList>
    </citation>
    <scope>NUCLEOTIDE SEQUENCE [LARGE SCALE MRNA]</scope>
    <source>
        <strain>cv. Columbia</strain>
    </source>
</reference>
<reference key="5">
    <citation type="journal article" date="2004" name="Plant Cell">
        <title>Genome-wide analysis of Arabidopsis pentatricopeptide repeat proteins reveals their essential role in organelle biogenesis.</title>
        <authorList>
            <person name="Lurin C."/>
            <person name="Andres C."/>
            <person name="Aubourg S."/>
            <person name="Bellaoui M."/>
            <person name="Bitton F."/>
            <person name="Bruyere C."/>
            <person name="Caboche M."/>
            <person name="Debast C."/>
            <person name="Gualberto J."/>
            <person name="Hoffmann B."/>
            <person name="Lecharny A."/>
            <person name="Le Ret M."/>
            <person name="Martin-Magniette M.-L."/>
            <person name="Mireau H."/>
            <person name="Peeters N."/>
            <person name="Renou J.-P."/>
            <person name="Szurek B."/>
            <person name="Taconnat L."/>
            <person name="Small I."/>
        </authorList>
    </citation>
    <scope>GENE FAMILY</scope>
</reference>
<feature type="chain" id="PRO_0000363573" description="Pentatricopeptide repeat-containing protein At5g59600">
    <location>
        <begin position="1"/>
        <end position="534"/>
    </location>
</feature>
<feature type="repeat" description="PPR 1">
    <location>
        <begin position="50"/>
        <end position="80"/>
    </location>
</feature>
<feature type="repeat" description="PPR 2">
    <location>
        <begin position="81"/>
        <end position="115"/>
    </location>
</feature>
<feature type="repeat" description="PPR 3">
    <location>
        <begin position="116"/>
        <end position="150"/>
    </location>
</feature>
<feature type="repeat" description="PPR 4">
    <location>
        <begin position="151"/>
        <end position="181"/>
    </location>
</feature>
<feature type="repeat" description="PPR 5">
    <location>
        <begin position="182"/>
        <end position="216"/>
    </location>
</feature>
<feature type="repeat" description="PPR 6">
    <location>
        <begin position="217"/>
        <end position="251"/>
    </location>
</feature>
<feature type="repeat" description="PPR 7">
    <location>
        <begin position="252"/>
        <end position="286"/>
    </location>
</feature>
<feature type="repeat" description="PPR 8">
    <location>
        <begin position="287"/>
        <end position="321"/>
    </location>
</feature>
<feature type="repeat" description="PPR 9">
    <location>
        <begin position="322"/>
        <end position="352"/>
    </location>
</feature>
<feature type="repeat" description="PPR 10">
    <location>
        <begin position="353"/>
        <end position="387"/>
    </location>
</feature>
<feature type="repeat" description="PPR 11">
    <location>
        <begin position="388"/>
        <end position="418"/>
    </location>
</feature>
<feature type="repeat" description="PPR 12">
    <location>
        <begin position="424"/>
        <end position="454"/>
    </location>
</feature>
<feature type="region of interest" description="Type E motif">
    <location>
        <begin position="459"/>
        <end position="534"/>
    </location>
</feature>
<keyword id="KW-1185">Reference proteome</keyword>
<keyword id="KW-0677">Repeat</keyword>
<evidence type="ECO:0000305" key="1"/>
<accession>Q9FGR2</accession>
<sequence length="534" mass="59955">MKKLTIVPSSFRLLSIGSYVELIEANGRDRLFCRGRVLHAHLVTSGIARLTRIAAKLVTFYVECGKVLDARKVFDEMPKRDISGCVVMIGACARNGYYQESLDFFREMYKDGLKLDAFIVPSLLKASRNLLDREFGKMIHCLVLKFSYESDAFIVSSLIDMYSKFGEVGNARKVFSDLGEQDLVVFNAMISGYANNSQADEALNLVKDMKLLGIKPDVITWNALISGFSHMRNEEKVSEILELMCLDGYKPDVVSWTSIISGLVHNFQNEKAFDAFKQMLTHGLYPNSATIITLLPACTTLAYMKHGKEIHGYSVVTGLEDHGFVRSALLDMYGKCGFISEAMILFRKTPKKTTVTFNSMIFCYANHGLADKAVELFDQMEATGEKLDHLTFTAILTACSHAGLTDLGQNLFLLMQNKYRIVPRLEHYACMVDLLGRAGKLVEAYEMIKAMRMEPDLFVWGALLAACRNHGNMELARIAAKHLAELEPENSGNGLLLTSLYANAGSWESVVRMKKMIKKKRFRRFLGSSWVETV</sequence>
<comment type="similarity">
    <text evidence="1">Belongs to the PPR family. PCMP-E subfamily.</text>
</comment>
<comment type="online information" name="Pentatricopeptide repeat proteins">
    <link uri="https://ppr.plantenergy.uwa.edu.au"/>
</comment>
<name>PP436_ARATH</name>
<protein>
    <recommendedName>
        <fullName>Pentatricopeptide repeat-containing protein At5g59600</fullName>
    </recommendedName>
</protein>
<organism>
    <name type="scientific">Arabidopsis thaliana</name>
    <name type="common">Mouse-ear cress</name>
    <dbReference type="NCBI Taxonomy" id="3702"/>
    <lineage>
        <taxon>Eukaryota</taxon>
        <taxon>Viridiplantae</taxon>
        <taxon>Streptophyta</taxon>
        <taxon>Embryophyta</taxon>
        <taxon>Tracheophyta</taxon>
        <taxon>Spermatophyta</taxon>
        <taxon>Magnoliopsida</taxon>
        <taxon>eudicotyledons</taxon>
        <taxon>Gunneridae</taxon>
        <taxon>Pentapetalae</taxon>
        <taxon>rosids</taxon>
        <taxon>malvids</taxon>
        <taxon>Brassicales</taxon>
        <taxon>Brassicaceae</taxon>
        <taxon>Camelineae</taxon>
        <taxon>Arabidopsis</taxon>
    </lineage>
</organism>
<dbReference type="EMBL" id="AB025604">
    <property type="protein sequence ID" value="BAB11040.1"/>
    <property type="molecule type" value="Genomic_DNA"/>
</dbReference>
<dbReference type="EMBL" id="AB006705">
    <property type="protein sequence ID" value="BAB11040.1"/>
    <property type="status" value="JOINED"/>
    <property type="molecule type" value="Genomic_DNA"/>
</dbReference>
<dbReference type="EMBL" id="CP002688">
    <property type="protein sequence ID" value="AED97210.1"/>
    <property type="molecule type" value="Genomic_DNA"/>
</dbReference>
<dbReference type="EMBL" id="BT023730">
    <property type="protein sequence ID" value="AAZ23922.1"/>
    <property type="molecule type" value="mRNA"/>
</dbReference>
<dbReference type="RefSeq" id="NP_200768.1">
    <property type="nucleotide sequence ID" value="NM_125352.4"/>
</dbReference>
<dbReference type="SMR" id="Q9FGR2"/>
<dbReference type="FunCoup" id="Q9FGR2">
    <property type="interactions" value="15"/>
</dbReference>
<dbReference type="STRING" id="3702.Q9FGR2"/>
<dbReference type="PaxDb" id="3702-AT5G59600.1"/>
<dbReference type="ProteomicsDB" id="249317"/>
<dbReference type="EnsemblPlants" id="AT5G59600.1">
    <property type="protein sequence ID" value="AT5G59600.1"/>
    <property type="gene ID" value="AT5G59600"/>
</dbReference>
<dbReference type="GeneID" id="836079"/>
<dbReference type="Gramene" id="AT5G59600.1">
    <property type="protein sequence ID" value="AT5G59600.1"/>
    <property type="gene ID" value="AT5G59600"/>
</dbReference>
<dbReference type="KEGG" id="ath:AT5G59600"/>
<dbReference type="Araport" id="AT5G59600"/>
<dbReference type="TAIR" id="AT5G59600"/>
<dbReference type="eggNOG" id="KOG4197">
    <property type="taxonomic scope" value="Eukaryota"/>
</dbReference>
<dbReference type="HOGENOM" id="CLU_002706_0_1_1"/>
<dbReference type="InParanoid" id="Q9FGR2"/>
<dbReference type="OMA" id="YPNSATI"/>
<dbReference type="PhylomeDB" id="Q9FGR2"/>
<dbReference type="PRO" id="PR:Q9FGR2"/>
<dbReference type="Proteomes" id="UP000006548">
    <property type="component" value="Chromosome 5"/>
</dbReference>
<dbReference type="ExpressionAtlas" id="Q9FGR2">
    <property type="expression patterns" value="baseline and differential"/>
</dbReference>
<dbReference type="GO" id="GO:0003723">
    <property type="term" value="F:RNA binding"/>
    <property type="evidence" value="ECO:0007669"/>
    <property type="project" value="InterPro"/>
</dbReference>
<dbReference type="GO" id="GO:0009451">
    <property type="term" value="P:RNA modification"/>
    <property type="evidence" value="ECO:0007669"/>
    <property type="project" value="InterPro"/>
</dbReference>
<dbReference type="FunFam" id="1.25.40.10:FF:001210">
    <property type="entry name" value="Pentatricopeptide repeat-containing protein"/>
    <property type="match status" value="1"/>
</dbReference>
<dbReference type="FunFam" id="1.25.40.10:FF:001383">
    <property type="entry name" value="Pentatricopeptide repeat-containing protein mitochondrial"/>
    <property type="match status" value="1"/>
</dbReference>
<dbReference type="FunFam" id="1.25.40.10:FF:001921">
    <property type="entry name" value="Pentatricopeptide repeat-containing protein mitochondrial"/>
    <property type="match status" value="1"/>
</dbReference>
<dbReference type="Gene3D" id="1.25.40.10">
    <property type="entry name" value="Tetratricopeptide repeat domain"/>
    <property type="match status" value="3"/>
</dbReference>
<dbReference type="InterPro" id="IPR046848">
    <property type="entry name" value="E_motif"/>
</dbReference>
<dbReference type="InterPro" id="IPR002885">
    <property type="entry name" value="Pentatricopeptide_rpt"/>
</dbReference>
<dbReference type="InterPro" id="IPR046960">
    <property type="entry name" value="PPR_At4g14850-like_plant"/>
</dbReference>
<dbReference type="InterPro" id="IPR011990">
    <property type="entry name" value="TPR-like_helical_dom_sf"/>
</dbReference>
<dbReference type="NCBIfam" id="TIGR00756">
    <property type="entry name" value="PPR"/>
    <property type="match status" value="5"/>
</dbReference>
<dbReference type="PANTHER" id="PTHR47926">
    <property type="entry name" value="PENTATRICOPEPTIDE REPEAT-CONTAINING PROTEIN"/>
    <property type="match status" value="1"/>
</dbReference>
<dbReference type="PANTHER" id="PTHR47926:SF487">
    <property type="entry name" value="REPEAT (TPR)-LIKE SUPERFAMILY PROTEIN, PUTATIVE-RELATED"/>
    <property type="match status" value="1"/>
</dbReference>
<dbReference type="Pfam" id="PF20431">
    <property type="entry name" value="E_motif"/>
    <property type="match status" value="1"/>
</dbReference>
<dbReference type="Pfam" id="PF01535">
    <property type="entry name" value="PPR"/>
    <property type="match status" value="5"/>
</dbReference>
<dbReference type="Pfam" id="PF13041">
    <property type="entry name" value="PPR_2"/>
    <property type="match status" value="3"/>
</dbReference>
<dbReference type="PROSITE" id="PS51375">
    <property type="entry name" value="PPR"/>
    <property type="match status" value="11"/>
</dbReference>
<gene>
    <name type="primary">PCMP-E1</name>
    <name type="ordered locus">At5g59600</name>
    <name type="ORF">F2O15.13</name>
</gene>